<organism>
    <name type="scientific">Mycoplasma genitalium (strain ATCC 33530 / DSM 19775 / NCTC 10195 / G37)</name>
    <name type="common">Mycoplasmoides genitalium</name>
    <dbReference type="NCBI Taxonomy" id="243273"/>
    <lineage>
        <taxon>Bacteria</taxon>
        <taxon>Bacillati</taxon>
        <taxon>Mycoplasmatota</taxon>
        <taxon>Mycoplasmoidales</taxon>
        <taxon>Mycoplasmoidaceae</taxon>
        <taxon>Mycoplasmoides</taxon>
    </lineage>
</organism>
<dbReference type="EMBL" id="L43967">
    <property type="protein sequence ID" value="AAC71349.1"/>
    <property type="molecule type" value="Genomic_DNA"/>
</dbReference>
<dbReference type="PIR" id="F64214">
    <property type="entry name" value="F64214"/>
</dbReference>
<dbReference type="RefSeq" id="WP_009885688.1">
    <property type="nucleotide sequence ID" value="NC_000908.2"/>
</dbReference>
<dbReference type="SMR" id="P47378"/>
<dbReference type="FunCoup" id="P47378">
    <property type="interactions" value="179"/>
</dbReference>
<dbReference type="STRING" id="243273.MG_132"/>
<dbReference type="GeneID" id="88282257"/>
<dbReference type="KEGG" id="mge:MG_132"/>
<dbReference type="eggNOG" id="COG0537">
    <property type="taxonomic scope" value="Bacteria"/>
</dbReference>
<dbReference type="HOGENOM" id="CLU_056776_3_3_14"/>
<dbReference type="InParanoid" id="P47378"/>
<dbReference type="OrthoDB" id="9784774at2"/>
<dbReference type="BioCyc" id="MGEN243273:G1GJ2-146-MONOMER"/>
<dbReference type="Proteomes" id="UP000000807">
    <property type="component" value="Chromosome"/>
</dbReference>
<dbReference type="GO" id="GO:0003824">
    <property type="term" value="F:catalytic activity"/>
    <property type="evidence" value="ECO:0007669"/>
    <property type="project" value="InterPro"/>
</dbReference>
<dbReference type="GO" id="GO:0009117">
    <property type="term" value="P:nucleotide metabolic process"/>
    <property type="evidence" value="ECO:0000318"/>
    <property type="project" value="GO_Central"/>
</dbReference>
<dbReference type="CDD" id="cd01277">
    <property type="entry name" value="HINT_subgroup"/>
    <property type="match status" value="1"/>
</dbReference>
<dbReference type="Gene3D" id="3.30.428.10">
    <property type="entry name" value="HIT-like"/>
    <property type="match status" value="1"/>
</dbReference>
<dbReference type="InterPro" id="IPR039384">
    <property type="entry name" value="HINT"/>
</dbReference>
<dbReference type="InterPro" id="IPR019808">
    <property type="entry name" value="Histidine_triad_CS"/>
</dbReference>
<dbReference type="InterPro" id="IPR001310">
    <property type="entry name" value="Histidine_triad_HIT"/>
</dbReference>
<dbReference type="InterPro" id="IPR011146">
    <property type="entry name" value="HIT-like"/>
</dbReference>
<dbReference type="InterPro" id="IPR036265">
    <property type="entry name" value="HIT-like_sf"/>
</dbReference>
<dbReference type="PANTHER" id="PTHR46648:SF1">
    <property type="entry name" value="ADENOSINE 5'-MONOPHOSPHORAMIDASE HNT1"/>
    <property type="match status" value="1"/>
</dbReference>
<dbReference type="PANTHER" id="PTHR46648">
    <property type="entry name" value="HIT FAMILY PROTEIN 1"/>
    <property type="match status" value="1"/>
</dbReference>
<dbReference type="Pfam" id="PF01230">
    <property type="entry name" value="HIT"/>
    <property type="match status" value="1"/>
</dbReference>
<dbReference type="PRINTS" id="PR00332">
    <property type="entry name" value="HISTRIAD"/>
</dbReference>
<dbReference type="SUPFAM" id="SSF54197">
    <property type="entry name" value="HIT-like"/>
    <property type="match status" value="1"/>
</dbReference>
<dbReference type="PROSITE" id="PS00892">
    <property type="entry name" value="HIT_1"/>
    <property type="match status" value="1"/>
</dbReference>
<dbReference type="PROSITE" id="PS51084">
    <property type="entry name" value="HIT_2"/>
    <property type="match status" value="1"/>
</dbReference>
<accession>P47378</accession>
<name>YHIT_MYCGE</name>
<keyword id="KW-1185">Reference proteome</keyword>
<feature type="chain" id="PRO_0000109820" description="Uncharacterized HIT-like protein MG132">
    <location>
        <begin position="1"/>
        <end position="141"/>
    </location>
</feature>
<feature type="domain" description="HIT" evidence="1">
    <location>
        <begin position="10"/>
        <end position="117"/>
    </location>
</feature>
<feature type="short sequence motif" description="Histidine triad motif">
    <location>
        <begin position="102"/>
        <end position="106"/>
    </location>
</feature>
<reference key="1">
    <citation type="journal article" date="1995" name="Science">
        <title>The minimal gene complement of Mycoplasma genitalium.</title>
        <authorList>
            <person name="Fraser C.M."/>
            <person name="Gocayne J.D."/>
            <person name="White O."/>
            <person name="Adams M.D."/>
            <person name="Clayton R.A."/>
            <person name="Fleischmann R.D."/>
            <person name="Bult C.J."/>
            <person name="Kerlavage A.R."/>
            <person name="Sutton G.G."/>
            <person name="Kelley J.M."/>
            <person name="Fritchman J.L."/>
            <person name="Weidman J.F."/>
            <person name="Small K.V."/>
            <person name="Sandusky M."/>
            <person name="Fuhrmann J.L."/>
            <person name="Nguyen D.T."/>
            <person name="Utterback T.R."/>
            <person name="Saudek D.M."/>
            <person name="Phillips C.A."/>
            <person name="Merrick J.M."/>
            <person name="Tomb J.-F."/>
            <person name="Dougherty B.A."/>
            <person name="Bott K.F."/>
            <person name="Hu P.-C."/>
            <person name="Lucier T.S."/>
            <person name="Peterson S.N."/>
            <person name="Smith H.O."/>
            <person name="Hutchison C.A. III"/>
            <person name="Venter J.C."/>
        </authorList>
    </citation>
    <scope>NUCLEOTIDE SEQUENCE [LARGE SCALE GENOMIC DNA]</scope>
    <source>
        <strain>ATCC 33530 / DSM 19775 / NCTC 10195 / G37</strain>
    </source>
</reference>
<evidence type="ECO:0000255" key="1">
    <source>
        <dbReference type="PROSITE-ProRule" id="PRU00464"/>
    </source>
</evidence>
<sequence>MEKNTTSSCIFCDIVQGSITSYKIGENEHAIAFLDAFPVADGHTLVIPKKHAVDFSSTDQKELQAVSLLAKQIALKLKMTLKPSGLNYVSNEGAIAGQVVFHFHLHIVPKYETGKGFGYNVNKTNKRSLEENYQLISESKN</sequence>
<gene>
    <name type="ordered locus">MG132</name>
</gene>
<proteinExistence type="predicted"/>
<protein>
    <recommendedName>
        <fullName>Uncharacterized HIT-like protein MG132</fullName>
    </recommendedName>
</protein>